<reference key="1">
    <citation type="journal article" date="2008" name="Genome Res.">
        <title>Comparative genome analysis of Salmonella enteritidis PT4 and Salmonella gallinarum 287/91 provides insights into evolutionary and host adaptation pathways.</title>
        <authorList>
            <person name="Thomson N.R."/>
            <person name="Clayton D.J."/>
            <person name="Windhorst D."/>
            <person name="Vernikos G."/>
            <person name="Davidson S."/>
            <person name="Churcher C."/>
            <person name="Quail M.A."/>
            <person name="Stevens M."/>
            <person name="Jones M.A."/>
            <person name="Watson M."/>
            <person name="Barron A."/>
            <person name="Layton A."/>
            <person name="Pickard D."/>
            <person name="Kingsley R.A."/>
            <person name="Bignell A."/>
            <person name="Clark L."/>
            <person name="Harris B."/>
            <person name="Ormond D."/>
            <person name="Abdellah Z."/>
            <person name="Brooks K."/>
            <person name="Cherevach I."/>
            <person name="Chillingworth T."/>
            <person name="Woodward J."/>
            <person name="Norberczak H."/>
            <person name="Lord A."/>
            <person name="Arrowsmith C."/>
            <person name="Jagels K."/>
            <person name="Moule S."/>
            <person name="Mungall K."/>
            <person name="Saunders M."/>
            <person name="Whitehead S."/>
            <person name="Chabalgoity J.A."/>
            <person name="Maskell D."/>
            <person name="Humphreys T."/>
            <person name="Roberts M."/>
            <person name="Barrow P.A."/>
            <person name="Dougan G."/>
            <person name="Parkhill J."/>
        </authorList>
    </citation>
    <scope>NUCLEOTIDE SEQUENCE [LARGE SCALE GENOMIC DNA]</scope>
    <source>
        <strain>287/91 / NCTC 13346</strain>
    </source>
</reference>
<keyword id="KW-0997">Cell inner membrane</keyword>
<keyword id="KW-1003">Cell membrane</keyword>
<keyword id="KW-0406">Ion transport</keyword>
<keyword id="KW-0472">Membrane</keyword>
<keyword id="KW-0915">Sodium</keyword>
<keyword id="KW-0739">Sodium transport</keyword>
<keyword id="KW-0769">Symport</keyword>
<keyword id="KW-0812">Transmembrane</keyword>
<keyword id="KW-1133">Transmembrane helix</keyword>
<keyword id="KW-0813">Transport</keyword>
<name>ACTP_SALG2</name>
<comment type="function">
    <text evidence="1">Transports acetate.</text>
</comment>
<comment type="subcellular location">
    <subcellularLocation>
        <location evidence="1">Cell inner membrane</location>
        <topology evidence="1">Multi-pass membrane protein</topology>
    </subcellularLocation>
</comment>
<comment type="similarity">
    <text evidence="1">Belongs to the sodium:solute symporter (SSF) (TC 2.A.21) family.</text>
</comment>
<evidence type="ECO:0000255" key="1">
    <source>
        <dbReference type="HAMAP-Rule" id="MF_01426"/>
    </source>
</evidence>
<organism>
    <name type="scientific">Salmonella gallinarum (strain 287/91 / NCTC 13346)</name>
    <dbReference type="NCBI Taxonomy" id="550538"/>
    <lineage>
        <taxon>Bacteria</taxon>
        <taxon>Pseudomonadati</taxon>
        <taxon>Pseudomonadota</taxon>
        <taxon>Gammaproteobacteria</taxon>
        <taxon>Enterobacterales</taxon>
        <taxon>Enterobacteriaceae</taxon>
        <taxon>Salmonella</taxon>
    </lineage>
</organism>
<dbReference type="EMBL" id="AM933173">
    <property type="protein sequence ID" value="CAR39884.1"/>
    <property type="molecule type" value="Genomic_DNA"/>
</dbReference>
<dbReference type="RefSeq" id="WP_000832538.1">
    <property type="nucleotide sequence ID" value="NC_011274.1"/>
</dbReference>
<dbReference type="SMR" id="B5R937"/>
<dbReference type="KEGG" id="seg:SG4117"/>
<dbReference type="HOGENOM" id="CLU_018808_8_3_6"/>
<dbReference type="Proteomes" id="UP000008321">
    <property type="component" value="Chromosome"/>
</dbReference>
<dbReference type="GO" id="GO:0005886">
    <property type="term" value="C:plasma membrane"/>
    <property type="evidence" value="ECO:0007669"/>
    <property type="project" value="UniProtKB-SubCell"/>
</dbReference>
<dbReference type="GO" id="GO:0015123">
    <property type="term" value="F:acetate transmembrane transporter activity"/>
    <property type="evidence" value="ECO:0007669"/>
    <property type="project" value="UniProtKB-UniRule"/>
</dbReference>
<dbReference type="GO" id="GO:0043879">
    <property type="term" value="F:glycolate transmembrane transporter activity"/>
    <property type="evidence" value="ECO:0007669"/>
    <property type="project" value="InterPro"/>
</dbReference>
<dbReference type="GO" id="GO:0015293">
    <property type="term" value="F:symporter activity"/>
    <property type="evidence" value="ECO:0007669"/>
    <property type="project" value="UniProtKB-KW"/>
</dbReference>
<dbReference type="GO" id="GO:0006847">
    <property type="term" value="P:plasma membrane acetate transport"/>
    <property type="evidence" value="ECO:0007669"/>
    <property type="project" value="TreeGrafter"/>
</dbReference>
<dbReference type="GO" id="GO:0006814">
    <property type="term" value="P:sodium ion transport"/>
    <property type="evidence" value="ECO:0007669"/>
    <property type="project" value="UniProtKB-KW"/>
</dbReference>
<dbReference type="CDD" id="cd11480">
    <property type="entry name" value="SLC5sbd_u4"/>
    <property type="match status" value="1"/>
</dbReference>
<dbReference type="FunFam" id="1.20.1730.10:FF:000001">
    <property type="entry name" value="Cation/acetate symporter ActP"/>
    <property type="match status" value="1"/>
</dbReference>
<dbReference type="Gene3D" id="1.20.1730.10">
    <property type="entry name" value="Sodium/glucose cotransporter"/>
    <property type="match status" value="1"/>
</dbReference>
<dbReference type="HAMAP" id="MF_01426">
    <property type="entry name" value="Acet_symport_ActP"/>
    <property type="match status" value="1"/>
</dbReference>
<dbReference type="InterPro" id="IPR014083">
    <property type="entry name" value="Cation/Ac_symporter_ActP"/>
</dbReference>
<dbReference type="InterPro" id="IPR038377">
    <property type="entry name" value="Na/Glc_symporter_sf"/>
</dbReference>
<dbReference type="InterPro" id="IPR001734">
    <property type="entry name" value="Na/solute_symporter"/>
</dbReference>
<dbReference type="InterPro" id="IPR018212">
    <property type="entry name" value="Na/solute_symporter_CS"/>
</dbReference>
<dbReference type="InterPro" id="IPR050277">
    <property type="entry name" value="Sodium:Solute_Symporter"/>
</dbReference>
<dbReference type="NCBIfam" id="NF006903">
    <property type="entry name" value="PRK09395.1"/>
    <property type="match status" value="1"/>
</dbReference>
<dbReference type="NCBIfam" id="NF009135">
    <property type="entry name" value="PRK12488.1"/>
    <property type="match status" value="1"/>
</dbReference>
<dbReference type="NCBIfam" id="TIGR00813">
    <property type="entry name" value="sss"/>
    <property type="match status" value="1"/>
</dbReference>
<dbReference type="NCBIfam" id="TIGR02711">
    <property type="entry name" value="symport_actP"/>
    <property type="match status" value="1"/>
</dbReference>
<dbReference type="PANTHER" id="PTHR48086:SF6">
    <property type="entry name" value="CATION_ACETATE SYMPORTER ACTP"/>
    <property type="match status" value="1"/>
</dbReference>
<dbReference type="PANTHER" id="PTHR48086">
    <property type="entry name" value="SODIUM/PROLINE SYMPORTER-RELATED"/>
    <property type="match status" value="1"/>
</dbReference>
<dbReference type="Pfam" id="PF00474">
    <property type="entry name" value="SSF"/>
    <property type="match status" value="1"/>
</dbReference>
<dbReference type="PROSITE" id="PS00456">
    <property type="entry name" value="NA_SOLUT_SYMP_1"/>
    <property type="match status" value="1"/>
</dbReference>
<dbReference type="PROSITE" id="PS00457">
    <property type="entry name" value="NA_SOLUT_SYMP_2"/>
    <property type="match status" value="1"/>
</dbReference>
<dbReference type="PROSITE" id="PS50283">
    <property type="entry name" value="NA_SOLUT_SYMP_3"/>
    <property type="match status" value="1"/>
</dbReference>
<gene>
    <name evidence="1" type="primary">actP</name>
    <name type="ordered locus">SG4117</name>
</gene>
<feature type="chain" id="PRO_1000145725" description="Cation/acetate symporter ActP">
    <location>
        <begin position="1"/>
        <end position="549"/>
    </location>
</feature>
<feature type="transmembrane region" description="Helical" evidence="1">
    <location>
        <begin position="33"/>
        <end position="53"/>
    </location>
</feature>
<feature type="transmembrane region" description="Helical" evidence="1">
    <location>
        <begin position="77"/>
        <end position="97"/>
    </location>
</feature>
<feature type="transmembrane region" description="Helical" evidence="1">
    <location>
        <begin position="103"/>
        <end position="123"/>
    </location>
</feature>
<feature type="transmembrane region" description="Helical" evidence="1">
    <location>
        <begin position="148"/>
        <end position="168"/>
    </location>
</feature>
<feature type="transmembrane region" description="Helical" evidence="1">
    <location>
        <begin position="183"/>
        <end position="203"/>
    </location>
</feature>
<feature type="transmembrane region" description="Helical" evidence="1">
    <location>
        <begin position="206"/>
        <end position="226"/>
    </location>
</feature>
<feature type="transmembrane region" description="Helical" evidence="1">
    <location>
        <begin position="262"/>
        <end position="282"/>
    </location>
</feature>
<feature type="transmembrane region" description="Helical" evidence="1">
    <location>
        <begin position="303"/>
        <end position="323"/>
    </location>
</feature>
<feature type="transmembrane region" description="Helical" evidence="1">
    <location>
        <begin position="355"/>
        <end position="375"/>
    </location>
</feature>
<feature type="transmembrane region" description="Helical" evidence="1">
    <location>
        <begin position="404"/>
        <end position="424"/>
    </location>
</feature>
<feature type="transmembrane region" description="Helical" evidence="1">
    <location>
        <begin position="428"/>
        <end position="448"/>
    </location>
</feature>
<feature type="transmembrane region" description="Helical" evidence="1">
    <location>
        <begin position="464"/>
        <end position="484"/>
    </location>
</feature>
<feature type="transmembrane region" description="Helical" evidence="1">
    <location>
        <begin position="493"/>
        <end position="513"/>
    </location>
</feature>
<protein>
    <recommendedName>
        <fullName evidence="1">Cation/acetate symporter ActP</fullName>
    </recommendedName>
    <alternativeName>
        <fullName evidence="1">Acetate permease</fullName>
    </alternativeName>
    <alternativeName>
        <fullName evidence="1">Acetate transporter ActP</fullName>
    </alternativeName>
</protein>
<accession>B5R937</accession>
<sequence length="549" mass="59039">MKRVLTALAAALPFAAHAADAISGAVERQPTNWQAIIMFLIFVVFTLGITYWASKRVRSRSDYYTAGGNITGFQNGLAIAGDYMSAASFLGISALVFTSGYDGLIYSLGFLVGWPIILFLIAERLRNLGRYTFADVASYRLKQGPIRILSACGSLVVVALYLIAQMVGAGKLIELLFGLNYHIAVVLVGVLMMMYVLFGGMLATTWVQIIKAVLLLFGASFMAFMVMKHVGFSFNNLFTEAMAVHPKGTAIMSPGGLVQDPISALSLGLGLMFGTAGLPHILMRFFTVSDAREARKSVFYATGFMGYFYILTFIIGFGAIMLVGTNPAYKDAAGALIGGNNMAAVHLANAVGGNLFLGFISAVAFATILAVVAGLTLAGASAVSHDLYANVFRKGATEREELKVSKITVLVLGVIAIILGVLFENQNIAFMVGLAFAIAASCNFPIILLSMYWSKLTTRGAMLGGWLGLLTAVVLMILGPTIWVQILGHEKAIFPYEYPALFSISVAFLGIWFFSATDNSAEGNREREQFRAQFIRSQTGFGVEQGRAH</sequence>
<proteinExistence type="inferred from homology"/>